<keyword id="KW-0007">Acetylation</keyword>
<keyword id="KW-0143">Chaperone</keyword>
<keyword id="KW-0597">Phosphoprotein</keyword>
<keyword id="KW-1185">Reference proteome</keyword>
<keyword id="KW-0677">Repeat</keyword>
<keyword id="KW-0346">Stress response</keyword>
<evidence type="ECO:0000250" key="1">
    <source>
        <dbReference type="UniProtKB" id="P42759"/>
    </source>
</evidence>
<evidence type="ECO:0000256" key="2">
    <source>
        <dbReference type="SAM" id="MobiDB-lite"/>
    </source>
</evidence>
<evidence type="ECO:0000269" key="3">
    <source>
    </source>
</evidence>
<evidence type="ECO:0000305" key="4"/>
<evidence type="ECO:0007744" key="5">
    <source>
    </source>
</evidence>
<evidence type="ECO:0007744" key="6">
    <source>
    </source>
</evidence>
<organism>
    <name type="scientific">Arabidopsis thaliana</name>
    <name type="common">Mouse-ear cress</name>
    <dbReference type="NCBI Taxonomy" id="3702"/>
    <lineage>
        <taxon>Eukaryota</taxon>
        <taxon>Viridiplantae</taxon>
        <taxon>Streptophyta</taxon>
        <taxon>Embryophyta</taxon>
        <taxon>Tracheophyta</taxon>
        <taxon>Spermatophyta</taxon>
        <taxon>Magnoliopsida</taxon>
        <taxon>eudicotyledons</taxon>
        <taxon>Gunneridae</taxon>
        <taxon>Pentapetalae</taxon>
        <taxon>rosids</taxon>
        <taxon>malvids</taxon>
        <taxon>Brassicales</taxon>
        <taxon>Brassicaceae</taxon>
        <taxon>Camelineae</taxon>
        <taxon>Arabidopsis</taxon>
    </lineage>
</organism>
<accession>P42763</accession>
<accession>Q0WV63</accession>
<accession>Q9C5R5</accession>
<protein>
    <recommendedName>
        <fullName>Dehydrin ERD14</fullName>
    </recommendedName>
</protein>
<proteinExistence type="evidence at protein level"/>
<gene>
    <name type="primary">ERD14</name>
    <name type="ordered locus">At1g76180</name>
    <name type="ORF">T23E18.12</name>
    <name type="ORF">T23E18_36</name>
</gene>
<reference key="1">
    <citation type="journal article" date="1994" name="Plant Cell Physiol.">
        <title>Characterization of two cDNAs (ERD10 and ERD14) corresponding to genes that respond rapidly to dehydration stress in Arabidopsis thaliana.</title>
        <authorList>
            <person name="Kiyosue T."/>
            <person name="Yamaguchi-Shinozaki K."/>
            <person name="Shinozaki K."/>
        </authorList>
    </citation>
    <scope>NUCLEOTIDE SEQUENCE [MRNA]</scope>
    <source>
        <strain>cv. Columbia</strain>
    </source>
</reference>
<reference key="2">
    <citation type="journal article" date="2000" name="Nature">
        <title>Sequence and analysis of chromosome 1 of the plant Arabidopsis thaliana.</title>
        <authorList>
            <person name="Theologis A."/>
            <person name="Ecker J.R."/>
            <person name="Palm C.J."/>
            <person name="Federspiel N.A."/>
            <person name="Kaul S."/>
            <person name="White O."/>
            <person name="Alonso J."/>
            <person name="Altafi H."/>
            <person name="Araujo R."/>
            <person name="Bowman C.L."/>
            <person name="Brooks S.Y."/>
            <person name="Buehler E."/>
            <person name="Chan A."/>
            <person name="Chao Q."/>
            <person name="Chen H."/>
            <person name="Cheuk R.F."/>
            <person name="Chin C.W."/>
            <person name="Chung M.K."/>
            <person name="Conn L."/>
            <person name="Conway A.B."/>
            <person name="Conway A.R."/>
            <person name="Creasy T.H."/>
            <person name="Dewar K."/>
            <person name="Dunn P."/>
            <person name="Etgu P."/>
            <person name="Feldblyum T.V."/>
            <person name="Feng J.-D."/>
            <person name="Fong B."/>
            <person name="Fujii C.Y."/>
            <person name="Gill J.E."/>
            <person name="Goldsmith A.D."/>
            <person name="Haas B."/>
            <person name="Hansen N.F."/>
            <person name="Hughes B."/>
            <person name="Huizar L."/>
            <person name="Hunter J.L."/>
            <person name="Jenkins J."/>
            <person name="Johnson-Hopson C."/>
            <person name="Khan S."/>
            <person name="Khaykin E."/>
            <person name="Kim C.J."/>
            <person name="Koo H.L."/>
            <person name="Kremenetskaia I."/>
            <person name="Kurtz D.B."/>
            <person name="Kwan A."/>
            <person name="Lam B."/>
            <person name="Langin-Hooper S."/>
            <person name="Lee A."/>
            <person name="Lee J.M."/>
            <person name="Lenz C.A."/>
            <person name="Li J.H."/>
            <person name="Li Y.-P."/>
            <person name="Lin X."/>
            <person name="Liu S.X."/>
            <person name="Liu Z.A."/>
            <person name="Luros J.S."/>
            <person name="Maiti R."/>
            <person name="Marziali A."/>
            <person name="Militscher J."/>
            <person name="Miranda M."/>
            <person name="Nguyen M."/>
            <person name="Nierman W.C."/>
            <person name="Osborne B.I."/>
            <person name="Pai G."/>
            <person name="Peterson J."/>
            <person name="Pham P.K."/>
            <person name="Rizzo M."/>
            <person name="Rooney T."/>
            <person name="Rowley D."/>
            <person name="Sakano H."/>
            <person name="Salzberg S.L."/>
            <person name="Schwartz J.R."/>
            <person name="Shinn P."/>
            <person name="Southwick A.M."/>
            <person name="Sun H."/>
            <person name="Tallon L.J."/>
            <person name="Tambunga G."/>
            <person name="Toriumi M.J."/>
            <person name="Town C.D."/>
            <person name="Utterback T."/>
            <person name="Van Aken S."/>
            <person name="Vaysberg M."/>
            <person name="Vysotskaia V.S."/>
            <person name="Walker M."/>
            <person name="Wu D."/>
            <person name="Yu G."/>
            <person name="Fraser C.M."/>
            <person name="Venter J.C."/>
            <person name="Davis R.W."/>
        </authorList>
    </citation>
    <scope>NUCLEOTIDE SEQUENCE [LARGE SCALE GENOMIC DNA]</scope>
    <source>
        <strain>cv. Columbia</strain>
    </source>
</reference>
<reference key="3">
    <citation type="journal article" date="2017" name="Plant J.">
        <title>Araport11: a complete reannotation of the Arabidopsis thaliana reference genome.</title>
        <authorList>
            <person name="Cheng C.Y."/>
            <person name="Krishnakumar V."/>
            <person name="Chan A.P."/>
            <person name="Thibaud-Nissen F."/>
            <person name="Schobel S."/>
            <person name="Town C.D."/>
        </authorList>
    </citation>
    <scope>GENOME REANNOTATION</scope>
    <source>
        <strain>cv. Columbia</strain>
    </source>
</reference>
<reference key="4">
    <citation type="journal article" date="2003" name="Science">
        <title>Empirical analysis of transcriptional activity in the Arabidopsis genome.</title>
        <authorList>
            <person name="Yamada K."/>
            <person name="Lim J."/>
            <person name="Dale J.M."/>
            <person name="Chen H."/>
            <person name="Shinn P."/>
            <person name="Palm C.J."/>
            <person name="Southwick A.M."/>
            <person name="Wu H.C."/>
            <person name="Kim C.J."/>
            <person name="Nguyen M."/>
            <person name="Pham P.K."/>
            <person name="Cheuk R.F."/>
            <person name="Karlin-Newmann G."/>
            <person name="Liu S.X."/>
            <person name="Lam B."/>
            <person name="Sakano H."/>
            <person name="Wu T."/>
            <person name="Yu G."/>
            <person name="Miranda M."/>
            <person name="Quach H.L."/>
            <person name="Tripp M."/>
            <person name="Chang C.H."/>
            <person name="Lee J.M."/>
            <person name="Toriumi M.J."/>
            <person name="Chan M.M."/>
            <person name="Tang C.C."/>
            <person name="Onodera C.S."/>
            <person name="Deng J.M."/>
            <person name="Akiyama K."/>
            <person name="Ansari Y."/>
            <person name="Arakawa T."/>
            <person name="Banh J."/>
            <person name="Banno F."/>
            <person name="Bowser L."/>
            <person name="Brooks S.Y."/>
            <person name="Carninci P."/>
            <person name="Chao Q."/>
            <person name="Choy N."/>
            <person name="Enju A."/>
            <person name="Goldsmith A.D."/>
            <person name="Gurjal M."/>
            <person name="Hansen N.F."/>
            <person name="Hayashizaki Y."/>
            <person name="Johnson-Hopson C."/>
            <person name="Hsuan V.W."/>
            <person name="Iida K."/>
            <person name="Karnes M."/>
            <person name="Khan S."/>
            <person name="Koesema E."/>
            <person name="Ishida J."/>
            <person name="Jiang P.X."/>
            <person name="Jones T."/>
            <person name="Kawai J."/>
            <person name="Kamiya A."/>
            <person name="Meyers C."/>
            <person name="Nakajima M."/>
            <person name="Narusaka M."/>
            <person name="Seki M."/>
            <person name="Sakurai T."/>
            <person name="Satou M."/>
            <person name="Tamse R."/>
            <person name="Vaysberg M."/>
            <person name="Wallender E.K."/>
            <person name="Wong C."/>
            <person name="Yamamura Y."/>
            <person name="Yuan S."/>
            <person name="Shinozaki K."/>
            <person name="Davis R.W."/>
            <person name="Theologis A."/>
            <person name="Ecker J.R."/>
        </authorList>
    </citation>
    <scope>NUCLEOTIDE SEQUENCE [LARGE SCALE MRNA]</scope>
    <source>
        <strain>cv. Columbia</strain>
    </source>
</reference>
<reference key="5">
    <citation type="submission" date="2002-03" db="EMBL/GenBank/DDBJ databases">
        <title>Full-length cDNA from Arabidopsis thaliana.</title>
        <authorList>
            <person name="Brover V.V."/>
            <person name="Troukhan M.E."/>
            <person name="Alexandrov N.A."/>
            <person name="Lu Y.-P."/>
            <person name="Flavell R.B."/>
            <person name="Feldmann K.A."/>
        </authorList>
    </citation>
    <scope>NUCLEOTIDE SEQUENCE [LARGE SCALE MRNA]</scope>
</reference>
<reference key="6">
    <citation type="submission" date="2006-07" db="EMBL/GenBank/DDBJ databases">
        <title>Large-scale analysis of RIKEN Arabidopsis full-length (RAFL) cDNAs.</title>
        <authorList>
            <person name="Totoki Y."/>
            <person name="Seki M."/>
            <person name="Ishida J."/>
            <person name="Nakajima M."/>
            <person name="Enju A."/>
            <person name="Kamiya A."/>
            <person name="Narusaka M."/>
            <person name="Shin-i T."/>
            <person name="Nakagawa M."/>
            <person name="Sakamoto N."/>
            <person name="Oishi K."/>
            <person name="Kohara Y."/>
            <person name="Kobayashi M."/>
            <person name="Toyoda A."/>
            <person name="Sakaki Y."/>
            <person name="Sakurai T."/>
            <person name="Iida K."/>
            <person name="Akiyama K."/>
            <person name="Satou M."/>
            <person name="Toyoda T."/>
            <person name="Konagaya A."/>
            <person name="Carninci P."/>
            <person name="Kawai J."/>
            <person name="Hayashizaki Y."/>
            <person name="Shinozaki K."/>
        </authorList>
    </citation>
    <scope>NUCLEOTIDE SEQUENCE [LARGE SCALE MRNA]</scope>
    <source>
        <strain>cv. Columbia</strain>
    </source>
</reference>
<reference key="7">
    <citation type="journal article" date="2008" name="Plant Physiol.">
        <title>Chaperone activity of ERD10 and ERD14, two disordered stress-related plant proteins.</title>
        <authorList>
            <person name="Kovacs D."/>
            <person name="Kalmar E."/>
            <person name="Torok Z."/>
            <person name="Tompa P."/>
        </authorList>
    </citation>
    <scope>FUNCTION</scope>
</reference>
<reference key="8">
    <citation type="journal article" date="2009" name="J. Proteomics">
        <title>Phosphoproteomic analysis of nuclei-enriched fractions from Arabidopsis thaliana.</title>
        <authorList>
            <person name="Jones A.M.E."/>
            <person name="MacLean D."/>
            <person name="Studholme D.J."/>
            <person name="Serna-Sanz A."/>
            <person name="Andreasson E."/>
            <person name="Rathjen J.P."/>
            <person name="Peck S.C."/>
        </authorList>
    </citation>
    <scope>PHOSPHORYLATION [LARGE SCALE ANALYSIS] AT SER-59</scope>
    <scope>IDENTIFICATION BY MASS SPECTROMETRY [LARGE SCALE ANALYSIS]</scope>
    <source>
        <strain>cv. Columbia</strain>
    </source>
</reference>
<reference key="9">
    <citation type="journal article" date="2009" name="Plant Physiol.">
        <title>Large-scale Arabidopsis phosphoproteome profiling reveals novel chloroplast kinase substrates and phosphorylation networks.</title>
        <authorList>
            <person name="Reiland S."/>
            <person name="Messerli G."/>
            <person name="Baerenfaller K."/>
            <person name="Gerrits B."/>
            <person name="Endler A."/>
            <person name="Grossmann J."/>
            <person name="Gruissem W."/>
            <person name="Baginsky S."/>
        </authorList>
    </citation>
    <scope>PHOSPHORYLATION [LARGE SCALE ANALYSIS] AT SER-59</scope>
    <scope>IDENTIFICATION BY MASS SPECTROMETRY [LARGE SCALE ANALYSIS]</scope>
</reference>
<sequence length="185" mass="20786">MAEEIKNVPEQEVPKVATEESSAEVTDRGLFDFLGKKKDETKPEETPIASEFEQKVHISEPEPEVKHESLLEKLHRSDSSSSSSSEEEGSDGEKRKKKKEKKKPTTEVEVKEEEKKGFMEKLKEKLPGHKKPEDGSAVAAAPVVVPPPVEEAHPVEKKGILEKIKEKLPGYHPKTTVEEEKKDKE</sequence>
<dbReference type="EMBL" id="D17715">
    <property type="protein sequence ID" value="BAA04569.1"/>
    <property type="molecule type" value="mRNA"/>
</dbReference>
<dbReference type="EMBL" id="AC009978">
    <property type="protein sequence ID" value="AAF17644.1"/>
    <property type="molecule type" value="Genomic_DNA"/>
</dbReference>
<dbReference type="EMBL" id="CP002684">
    <property type="protein sequence ID" value="AEE35806.1"/>
    <property type="molecule type" value="Genomic_DNA"/>
</dbReference>
<dbReference type="EMBL" id="CP002684">
    <property type="protein sequence ID" value="AEE35807.1"/>
    <property type="molecule type" value="Genomic_DNA"/>
</dbReference>
<dbReference type="EMBL" id="AF324699">
    <property type="protein sequence ID" value="AAG40050.2"/>
    <property type="molecule type" value="mRNA"/>
</dbReference>
<dbReference type="EMBL" id="AF326904">
    <property type="protein sequence ID" value="AAG41486.1"/>
    <property type="molecule type" value="mRNA"/>
</dbReference>
<dbReference type="EMBL" id="AF339722">
    <property type="protein sequence ID" value="AAK00404.1"/>
    <property type="molecule type" value="mRNA"/>
</dbReference>
<dbReference type="EMBL" id="AF428362">
    <property type="protein sequence ID" value="AAL16292.1"/>
    <property type="molecule type" value="mRNA"/>
</dbReference>
<dbReference type="EMBL" id="AY039594">
    <property type="protein sequence ID" value="AAK62649.1"/>
    <property type="molecule type" value="mRNA"/>
</dbReference>
<dbReference type="EMBL" id="AY054151">
    <property type="protein sequence ID" value="AAL06812.1"/>
    <property type="molecule type" value="mRNA"/>
</dbReference>
<dbReference type="EMBL" id="AY054233">
    <property type="protein sequence ID" value="AAL06893.1"/>
    <property type="molecule type" value="mRNA"/>
</dbReference>
<dbReference type="EMBL" id="AY086997">
    <property type="protein sequence ID" value="AAM64558.1"/>
    <property type="molecule type" value="mRNA"/>
</dbReference>
<dbReference type="EMBL" id="AK226910">
    <property type="protein sequence ID" value="BAE98985.1"/>
    <property type="molecule type" value="mRNA"/>
</dbReference>
<dbReference type="PIR" id="F96789">
    <property type="entry name" value="F96789"/>
</dbReference>
<dbReference type="RefSeq" id="NP_001185408.1">
    <property type="nucleotide sequence ID" value="NM_001198479.1"/>
</dbReference>
<dbReference type="RefSeq" id="NP_177745.1">
    <property type="nucleotide sequence ID" value="NM_106267.4"/>
</dbReference>
<dbReference type="BMRB" id="P42763"/>
<dbReference type="BioGRID" id="29169">
    <property type="interactions" value="9"/>
</dbReference>
<dbReference type="FunCoup" id="P42763">
    <property type="interactions" value="175"/>
</dbReference>
<dbReference type="STRING" id="3702.P42763"/>
<dbReference type="TCDB" id="9.B.449.1.5">
    <property type="family name" value="the oxygen-regulated protein (orp) family"/>
</dbReference>
<dbReference type="iPTMnet" id="P42763"/>
<dbReference type="PaxDb" id="3702-AT1G76180.1"/>
<dbReference type="ProteomicsDB" id="221864"/>
<dbReference type="EnsemblPlants" id="AT1G76180.1">
    <property type="protein sequence ID" value="AT1G76180.1"/>
    <property type="gene ID" value="AT1G76180"/>
</dbReference>
<dbReference type="EnsemblPlants" id="AT1G76180.2">
    <property type="protein sequence ID" value="AT1G76180.2"/>
    <property type="gene ID" value="AT1G76180"/>
</dbReference>
<dbReference type="GeneID" id="843950"/>
<dbReference type="Gramene" id="AT1G76180.1">
    <property type="protein sequence ID" value="AT1G76180.1"/>
    <property type="gene ID" value="AT1G76180"/>
</dbReference>
<dbReference type="Gramene" id="AT1G76180.2">
    <property type="protein sequence ID" value="AT1G76180.2"/>
    <property type="gene ID" value="AT1G76180"/>
</dbReference>
<dbReference type="KEGG" id="ath:AT1G76180"/>
<dbReference type="Araport" id="AT1G76180"/>
<dbReference type="TAIR" id="AT1G76180">
    <property type="gene designation" value="ERD14"/>
</dbReference>
<dbReference type="eggNOG" id="ENOG502SRR2">
    <property type="taxonomic scope" value="Eukaryota"/>
</dbReference>
<dbReference type="HOGENOM" id="CLU_081104_1_0_1"/>
<dbReference type="InParanoid" id="P42763"/>
<dbReference type="OMA" id="PRVETHV"/>
<dbReference type="OrthoDB" id="1934367at2759"/>
<dbReference type="PRO" id="PR:P42763"/>
<dbReference type="Proteomes" id="UP000006548">
    <property type="component" value="Chromosome 1"/>
</dbReference>
<dbReference type="ExpressionAtlas" id="P42763">
    <property type="expression patterns" value="baseline and differential"/>
</dbReference>
<dbReference type="GO" id="GO:0009507">
    <property type="term" value="C:chloroplast"/>
    <property type="evidence" value="ECO:0007005"/>
    <property type="project" value="TAIR"/>
</dbReference>
<dbReference type="GO" id="GO:0005829">
    <property type="term" value="C:cytosol"/>
    <property type="evidence" value="ECO:0007005"/>
    <property type="project" value="TAIR"/>
</dbReference>
<dbReference type="GO" id="GO:0019898">
    <property type="term" value="C:extrinsic component of membrane"/>
    <property type="evidence" value="ECO:0000314"/>
    <property type="project" value="CAFA"/>
</dbReference>
<dbReference type="GO" id="GO:0005739">
    <property type="term" value="C:mitochondrion"/>
    <property type="evidence" value="ECO:0007005"/>
    <property type="project" value="TAIR"/>
</dbReference>
<dbReference type="GO" id="GO:0005886">
    <property type="term" value="C:plasma membrane"/>
    <property type="evidence" value="ECO:0007005"/>
    <property type="project" value="TAIR"/>
</dbReference>
<dbReference type="GO" id="GO:0005509">
    <property type="term" value="F:calcium ion binding"/>
    <property type="evidence" value="ECO:0000314"/>
    <property type="project" value="TAIR"/>
</dbReference>
<dbReference type="GO" id="GO:0008289">
    <property type="term" value="F:lipid binding"/>
    <property type="evidence" value="ECO:0000269"/>
    <property type="project" value="DisProt"/>
</dbReference>
<dbReference type="GO" id="GO:0003729">
    <property type="term" value="F:mRNA binding"/>
    <property type="evidence" value="ECO:0000314"/>
    <property type="project" value="TAIR"/>
</dbReference>
<dbReference type="GO" id="GO:0031210">
    <property type="term" value="F:phosphatidylcholine binding"/>
    <property type="evidence" value="ECO:0000314"/>
    <property type="project" value="CAFA"/>
</dbReference>
<dbReference type="GO" id="GO:0001786">
    <property type="term" value="F:phosphatidylserine binding"/>
    <property type="evidence" value="ECO:0000314"/>
    <property type="project" value="CAFA"/>
</dbReference>
<dbReference type="GO" id="GO:0044183">
    <property type="term" value="F:protein folding chaperone"/>
    <property type="evidence" value="ECO:0000269"/>
    <property type="project" value="DisProt"/>
</dbReference>
<dbReference type="GO" id="GO:0050821">
    <property type="term" value="P:protein stabilization"/>
    <property type="evidence" value="ECO:0000314"/>
    <property type="project" value="CAFA"/>
</dbReference>
<dbReference type="GO" id="GO:0090559">
    <property type="term" value="P:regulation of membrane permeability"/>
    <property type="evidence" value="ECO:0000314"/>
    <property type="project" value="CAFA"/>
</dbReference>
<dbReference type="GO" id="GO:0009737">
    <property type="term" value="P:response to abscisic acid"/>
    <property type="evidence" value="ECO:0000270"/>
    <property type="project" value="TAIR"/>
</dbReference>
<dbReference type="GO" id="GO:0009409">
    <property type="term" value="P:response to cold"/>
    <property type="evidence" value="ECO:0000270"/>
    <property type="project" value="TAIR"/>
</dbReference>
<dbReference type="GO" id="GO:0009269">
    <property type="term" value="P:response to desiccation"/>
    <property type="evidence" value="ECO:0000270"/>
    <property type="project" value="TAIR"/>
</dbReference>
<dbReference type="DisProt" id="DP00667"/>
<dbReference type="InterPro" id="IPR000167">
    <property type="entry name" value="Dehydrin"/>
</dbReference>
<dbReference type="InterPro" id="IPR030513">
    <property type="entry name" value="Dehydrin_CS"/>
</dbReference>
<dbReference type="PANTHER" id="PTHR33346:SF2">
    <property type="entry name" value="DEHYDRIN ERD14"/>
    <property type="match status" value="1"/>
</dbReference>
<dbReference type="PANTHER" id="PTHR33346">
    <property type="entry name" value="DEHYDRIN XERO 2-RELATED"/>
    <property type="match status" value="1"/>
</dbReference>
<dbReference type="Pfam" id="PF00257">
    <property type="entry name" value="Dehydrin"/>
    <property type="match status" value="1"/>
</dbReference>
<dbReference type="PROSITE" id="PS00315">
    <property type="entry name" value="DEHYDRIN_1"/>
    <property type="match status" value="1"/>
</dbReference>
<dbReference type="PROSITE" id="PS00823">
    <property type="entry name" value="DEHYDRIN_2"/>
    <property type="match status" value="2"/>
</dbReference>
<comment type="function">
    <text evidence="3">Intrinsically disordered protein acting as a chaperone. Prevents heat-induced aggregation and/or inactivation of various substrates. Binds to acidic phospholipid vesicles without affecting membrane fluidity.</text>
</comment>
<comment type="tissue specificity">
    <text>In stems, cauline leaves, roots and flowers. Low levels found in maturing seeds. Absent in dry seeds.</text>
</comment>
<comment type="induction">
    <text>By dehydration, cold stress and abscisic acid (ABA). Induction by dehydration occurs after 1 hour and increases to a maximum after 10 hours. Cold stress induction peaks at 1 hour and 5 hours after start of cold exposure.</text>
</comment>
<comment type="similarity">
    <text evidence="4">Belongs to the plant dehydrin family.</text>
</comment>
<feature type="initiator methionine" description="Removed" evidence="1">
    <location>
        <position position="1"/>
    </location>
</feature>
<feature type="chain" id="PRO_0000100037" description="Dehydrin ERD14">
    <location>
        <begin position="2"/>
        <end position="185"/>
    </location>
</feature>
<feature type="repeat" description="1">
    <location>
        <begin position="112"/>
        <end position="132"/>
    </location>
</feature>
<feature type="repeat" description="2">
    <location>
        <begin position="154"/>
        <end position="174"/>
    </location>
</feature>
<feature type="region of interest" description="Disordered" evidence="2">
    <location>
        <begin position="1"/>
        <end position="138"/>
    </location>
</feature>
<feature type="region of interest" description="2 X 21 AA repeats, Lys-rich">
    <location>
        <begin position="112"/>
        <end position="174"/>
    </location>
</feature>
<feature type="region of interest" description="Disordered" evidence="2">
    <location>
        <begin position="166"/>
        <end position="185"/>
    </location>
</feature>
<feature type="compositionally biased region" description="Basic and acidic residues" evidence="2">
    <location>
        <begin position="1"/>
        <end position="13"/>
    </location>
</feature>
<feature type="compositionally biased region" description="Basic and acidic residues" evidence="2">
    <location>
        <begin position="25"/>
        <end position="45"/>
    </location>
</feature>
<feature type="compositionally biased region" description="Basic and acidic residues" evidence="2">
    <location>
        <begin position="52"/>
        <end position="78"/>
    </location>
</feature>
<feature type="compositionally biased region" description="Basic and acidic residues" evidence="2">
    <location>
        <begin position="103"/>
        <end position="134"/>
    </location>
</feature>
<feature type="modified residue" description="N-acetylalanine" evidence="1">
    <location>
        <position position="2"/>
    </location>
</feature>
<feature type="modified residue" description="Phosphoserine" evidence="5 6">
    <location>
        <position position="59"/>
    </location>
</feature>
<feature type="sequence conflict" description="In Ref. 4; AAG40050." evidence="4" ref="4">
    <original>T</original>
    <variation>P</variation>
    <location>
        <position position="176"/>
    </location>
</feature>
<name>ERD14_ARATH</name>